<comment type="function">
    <text evidence="1">Catalyzes the transfer of the diacylglyceryl group from phosphatidylglycerol to the sulfhydryl group of the N-terminal cysteine of a prolipoprotein, the first step in the formation of mature lipoproteins.</text>
</comment>
<comment type="catalytic activity">
    <reaction evidence="1">
        <text>L-cysteinyl-[prolipoprotein] + a 1,2-diacyl-sn-glycero-3-phospho-(1'-sn-glycerol) = an S-1,2-diacyl-sn-glyceryl-L-cysteinyl-[prolipoprotein] + sn-glycerol 1-phosphate + H(+)</text>
        <dbReference type="Rhea" id="RHEA:56712"/>
        <dbReference type="Rhea" id="RHEA-COMP:14679"/>
        <dbReference type="Rhea" id="RHEA-COMP:14680"/>
        <dbReference type="ChEBI" id="CHEBI:15378"/>
        <dbReference type="ChEBI" id="CHEBI:29950"/>
        <dbReference type="ChEBI" id="CHEBI:57685"/>
        <dbReference type="ChEBI" id="CHEBI:64716"/>
        <dbReference type="ChEBI" id="CHEBI:140658"/>
        <dbReference type="EC" id="2.5.1.145"/>
    </reaction>
</comment>
<comment type="pathway">
    <text evidence="1">Protein modification; lipoprotein biosynthesis (diacylglyceryl transfer).</text>
</comment>
<comment type="subcellular location">
    <subcellularLocation>
        <location evidence="1">Cell inner membrane</location>
        <topology evidence="1">Multi-pass membrane protein</topology>
    </subcellularLocation>
</comment>
<comment type="similarity">
    <text evidence="1">Belongs to the Lgt family.</text>
</comment>
<sequence length="276" mass="31258">MKNVYVWPHFDPILVRFGPFAIHYYALAYITALVLGWRLMRRLVREAPVVATHEQVDDFLSWATLGVVLGGRLGYILFYQPVYFLDHLNRTYAVWDGGMSFHGGMLGVAVAILIYCRRHGIDPWRFGDRVAVPVPIGLFLGRIANFVNGELWGRPAPAWFPFRMIYPESGSDVPRYPSELIEATLEGLVLFIVLLIASRNERIRSQPGYLGGMFVMGYGIARTTAECFRQPDWFLGYLMFGLTMGQLLSIPMIVIGATMIWRAKYVARRQGALATA</sequence>
<proteinExistence type="inferred from homology"/>
<evidence type="ECO:0000255" key="1">
    <source>
        <dbReference type="HAMAP-Rule" id="MF_01147"/>
    </source>
</evidence>
<name>LGT_ACICJ</name>
<gene>
    <name evidence="1" type="primary">lgt</name>
    <name type="ordered locus">Acry_0425</name>
</gene>
<feature type="chain" id="PRO_1000053382" description="Phosphatidylglycerol--prolipoprotein diacylglyceryl transferase">
    <location>
        <begin position="1"/>
        <end position="276"/>
    </location>
</feature>
<feature type="transmembrane region" description="Helical" evidence="1">
    <location>
        <begin position="17"/>
        <end position="37"/>
    </location>
</feature>
<feature type="transmembrane region" description="Helical" evidence="1">
    <location>
        <begin position="59"/>
        <end position="79"/>
    </location>
</feature>
<feature type="transmembrane region" description="Helical" evidence="1">
    <location>
        <begin position="94"/>
        <end position="114"/>
    </location>
</feature>
<feature type="transmembrane region" description="Helical" evidence="1">
    <location>
        <begin position="132"/>
        <end position="152"/>
    </location>
</feature>
<feature type="transmembrane region" description="Helical" evidence="1">
    <location>
        <begin position="177"/>
        <end position="197"/>
    </location>
</feature>
<feature type="transmembrane region" description="Helical" evidence="1">
    <location>
        <begin position="208"/>
        <end position="225"/>
    </location>
</feature>
<feature type="transmembrane region" description="Helical" evidence="1">
    <location>
        <begin position="235"/>
        <end position="255"/>
    </location>
</feature>
<feature type="binding site" evidence="1">
    <location>
        <position position="142"/>
    </location>
    <ligand>
        <name>a 1,2-diacyl-sn-glycero-3-phospho-(1'-sn-glycerol)</name>
        <dbReference type="ChEBI" id="CHEBI:64716"/>
    </ligand>
</feature>
<dbReference type="EC" id="2.5.1.145" evidence="1"/>
<dbReference type="EMBL" id="CP000697">
    <property type="protein sequence ID" value="ABQ29650.1"/>
    <property type="molecule type" value="Genomic_DNA"/>
</dbReference>
<dbReference type="RefSeq" id="WP_007422304.1">
    <property type="nucleotide sequence ID" value="NC_009484.1"/>
</dbReference>
<dbReference type="SMR" id="A5FVL8"/>
<dbReference type="STRING" id="349163.Acry_0425"/>
<dbReference type="KEGG" id="acr:Acry_0425"/>
<dbReference type="eggNOG" id="COG0682">
    <property type="taxonomic scope" value="Bacteria"/>
</dbReference>
<dbReference type="HOGENOM" id="CLU_013386_1_0_5"/>
<dbReference type="UniPathway" id="UPA00664"/>
<dbReference type="Proteomes" id="UP000000245">
    <property type="component" value="Chromosome"/>
</dbReference>
<dbReference type="GO" id="GO:0005886">
    <property type="term" value="C:plasma membrane"/>
    <property type="evidence" value="ECO:0007669"/>
    <property type="project" value="UniProtKB-SubCell"/>
</dbReference>
<dbReference type="GO" id="GO:0008961">
    <property type="term" value="F:phosphatidylglycerol-prolipoprotein diacylglyceryl transferase activity"/>
    <property type="evidence" value="ECO:0007669"/>
    <property type="project" value="UniProtKB-UniRule"/>
</dbReference>
<dbReference type="GO" id="GO:0042158">
    <property type="term" value="P:lipoprotein biosynthetic process"/>
    <property type="evidence" value="ECO:0007669"/>
    <property type="project" value="UniProtKB-UniRule"/>
</dbReference>
<dbReference type="HAMAP" id="MF_01147">
    <property type="entry name" value="Lgt"/>
    <property type="match status" value="1"/>
</dbReference>
<dbReference type="InterPro" id="IPR001640">
    <property type="entry name" value="Lgt"/>
</dbReference>
<dbReference type="NCBIfam" id="TIGR00544">
    <property type="entry name" value="lgt"/>
    <property type="match status" value="1"/>
</dbReference>
<dbReference type="PANTHER" id="PTHR30589:SF0">
    <property type="entry name" value="PHOSPHATIDYLGLYCEROL--PROLIPOPROTEIN DIACYLGLYCERYL TRANSFERASE"/>
    <property type="match status" value="1"/>
</dbReference>
<dbReference type="PANTHER" id="PTHR30589">
    <property type="entry name" value="PROLIPOPROTEIN DIACYLGLYCERYL TRANSFERASE"/>
    <property type="match status" value="1"/>
</dbReference>
<dbReference type="Pfam" id="PF01790">
    <property type="entry name" value="LGT"/>
    <property type="match status" value="1"/>
</dbReference>
<dbReference type="PROSITE" id="PS01311">
    <property type="entry name" value="LGT"/>
    <property type="match status" value="1"/>
</dbReference>
<accession>A5FVL8</accession>
<protein>
    <recommendedName>
        <fullName evidence="1">Phosphatidylglycerol--prolipoprotein diacylglyceryl transferase</fullName>
        <ecNumber evidence="1">2.5.1.145</ecNumber>
    </recommendedName>
</protein>
<reference key="1">
    <citation type="submission" date="2007-05" db="EMBL/GenBank/DDBJ databases">
        <title>Complete sequence of chromosome of Acidiphilium cryptum JF-5.</title>
        <authorList>
            <consortium name="US DOE Joint Genome Institute"/>
            <person name="Copeland A."/>
            <person name="Lucas S."/>
            <person name="Lapidus A."/>
            <person name="Barry K."/>
            <person name="Detter J.C."/>
            <person name="Glavina del Rio T."/>
            <person name="Hammon N."/>
            <person name="Israni S."/>
            <person name="Dalin E."/>
            <person name="Tice H."/>
            <person name="Pitluck S."/>
            <person name="Sims D."/>
            <person name="Brettin T."/>
            <person name="Bruce D."/>
            <person name="Han C."/>
            <person name="Schmutz J."/>
            <person name="Larimer F."/>
            <person name="Land M."/>
            <person name="Hauser L."/>
            <person name="Kyrpides N."/>
            <person name="Kim E."/>
            <person name="Magnuson T."/>
            <person name="Richardson P."/>
        </authorList>
    </citation>
    <scope>NUCLEOTIDE SEQUENCE [LARGE SCALE GENOMIC DNA]</scope>
    <source>
        <strain>JF-5</strain>
    </source>
</reference>
<keyword id="KW-0997">Cell inner membrane</keyword>
<keyword id="KW-1003">Cell membrane</keyword>
<keyword id="KW-0472">Membrane</keyword>
<keyword id="KW-1185">Reference proteome</keyword>
<keyword id="KW-0808">Transferase</keyword>
<keyword id="KW-0812">Transmembrane</keyword>
<keyword id="KW-1133">Transmembrane helix</keyword>
<organism>
    <name type="scientific">Acidiphilium cryptum (strain JF-5)</name>
    <dbReference type="NCBI Taxonomy" id="349163"/>
    <lineage>
        <taxon>Bacteria</taxon>
        <taxon>Pseudomonadati</taxon>
        <taxon>Pseudomonadota</taxon>
        <taxon>Alphaproteobacteria</taxon>
        <taxon>Acetobacterales</taxon>
        <taxon>Acidocellaceae</taxon>
        <taxon>Acidiphilium</taxon>
    </lineage>
</organism>